<proteinExistence type="inferred from homology"/>
<comment type="function">
    <text evidence="1">Exhibits S-adenosyl-L-methionine-dependent methyltransferase activity.</text>
</comment>
<comment type="similarity">
    <text evidence="2">Belongs to the UPF0677 family.</text>
</comment>
<accession>A4FAI5</accession>
<organism>
    <name type="scientific">Saccharopolyspora erythraea (strain ATCC 11635 / DSM 40517 / JCM 4748 / NBRC 13426 / NCIMB 8594 / NRRL 2338)</name>
    <dbReference type="NCBI Taxonomy" id="405948"/>
    <lineage>
        <taxon>Bacteria</taxon>
        <taxon>Bacillati</taxon>
        <taxon>Actinomycetota</taxon>
        <taxon>Actinomycetes</taxon>
        <taxon>Pseudonocardiales</taxon>
        <taxon>Pseudonocardiaceae</taxon>
        <taxon>Saccharopolyspora</taxon>
    </lineage>
</organism>
<evidence type="ECO:0000250" key="1"/>
<evidence type="ECO:0000305" key="2"/>
<reference key="1">
    <citation type="journal article" date="2007" name="Nat. Biotechnol.">
        <title>Complete genome sequence of the erythromycin-producing bacterium Saccharopolyspora erythraea NRRL23338.</title>
        <authorList>
            <person name="Oliynyk M."/>
            <person name="Samborskyy M."/>
            <person name="Lester J.B."/>
            <person name="Mironenko T."/>
            <person name="Scott N."/>
            <person name="Dickens S."/>
            <person name="Haydock S.F."/>
            <person name="Leadlay P.F."/>
        </authorList>
    </citation>
    <scope>NUCLEOTIDE SEQUENCE [LARGE SCALE GENOMIC DNA]</scope>
    <source>
        <strain>ATCC 11635 / DSM 40517 / JCM 4748 / NBRC 13426 / NCIMB 8594 / NRRL 2338</strain>
    </source>
</reference>
<gene>
    <name type="ordered locus">SACE_1742</name>
</gene>
<feature type="chain" id="PRO_0000361263" description="Putative S-adenosyl-L-methionine-dependent methyltransferase SACE_1742">
    <location>
        <begin position="1"/>
        <end position="287"/>
    </location>
</feature>
<feature type="binding site" evidence="1">
    <location>
        <position position="119"/>
    </location>
    <ligand>
        <name>S-adenosyl-L-methionine</name>
        <dbReference type="ChEBI" id="CHEBI:59789"/>
    </ligand>
</feature>
<feature type="binding site" evidence="1">
    <location>
        <begin position="148"/>
        <end position="149"/>
    </location>
    <ligand>
        <name>S-adenosyl-L-methionine</name>
        <dbReference type="ChEBI" id="CHEBI:59789"/>
    </ligand>
</feature>
<dbReference type="EC" id="2.1.1.-"/>
<dbReference type="EMBL" id="AM420293">
    <property type="protein sequence ID" value="CAM01060.1"/>
    <property type="molecule type" value="Genomic_DNA"/>
</dbReference>
<dbReference type="RefSeq" id="WP_009943791.1">
    <property type="nucleotide sequence ID" value="NC_009142.1"/>
</dbReference>
<dbReference type="SMR" id="A4FAI5"/>
<dbReference type="STRING" id="405948.SACE_1742"/>
<dbReference type="DNASU" id="4941604"/>
<dbReference type="KEGG" id="sen:SACE_1742"/>
<dbReference type="eggNOG" id="COG3315">
    <property type="taxonomic scope" value="Bacteria"/>
</dbReference>
<dbReference type="HOGENOM" id="CLU_056160_2_1_11"/>
<dbReference type="OrthoDB" id="9806164at2"/>
<dbReference type="Proteomes" id="UP000006728">
    <property type="component" value="Chromosome"/>
</dbReference>
<dbReference type="GO" id="GO:0008168">
    <property type="term" value="F:methyltransferase activity"/>
    <property type="evidence" value="ECO:0007669"/>
    <property type="project" value="UniProtKB-KW"/>
</dbReference>
<dbReference type="GO" id="GO:0032259">
    <property type="term" value="P:methylation"/>
    <property type="evidence" value="ECO:0007669"/>
    <property type="project" value="UniProtKB-KW"/>
</dbReference>
<dbReference type="Gene3D" id="3.40.50.150">
    <property type="entry name" value="Vaccinia Virus protein VP39"/>
    <property type="match status" value="1"/>
</dbReference>
<dbReference type="InterPro" id="IPR007213">
    <property type="entry name" value="Ppm1/Ppm2/Tcmp"/>
</dbReference>
<dbReference type="InterPro" id="IPR029063">
    <property type="entry name" value="SAM-dependent_MTases_sf"/>
</dbReference>
<dbReference type="InterPro" id="IPR011610">
    <property type="entry name" value="SAM_mthyl_Trfase_ML2640-like"/>
</dbReference>
<dbReference type="NCBIfam" id="TIGR00027">
    <property type="entry name" value="mthyl_TIGR00027"/>
    <property type="match status" value="1"/>
</dbReference>
<dbReference type="PANTHER" id="PTHR43619">
    <property type="entry name" value="S-ADENOSYL-L-METHIONINE-DEPENDENT METHYLTRANSFERASE YKTD-RELATED"/>
    <property type="match status" value="1"/>
</dbReference>
<dbReference type="PANTHER" id="PTHR43619:SF2">
    <property type="entry name" value="S-ADENOSYL-L-METHIONINE-DEPENDENT METHYLTRANSFERASES SUPERFAMILY PROTEIN"/>
    <property type="match status" value="1"/>
</dbReference>
<dbReference type="Pfam" id="PF04072">
    <property type="entry name" value="LCM"/>
    <property type="match status" value="1"/>
</dbReference>
<dbReference type="SUPFAM" id="SSF53335">
    <property type="entry name" value="S-adenosyl-L-methionine-dependent methyltransferases"/>
    <property type="match status" value="1"/>
</dbReference>
<sequence>MSANEQWDIVSGVGITALAVAVARARESRRDDRLIDDPYAEPLIRAAQPPVPMSGDGGEAGALWHEMTDYVSVRSRFFDEWFARACAAGTRQAVVLASGLDTRAFRLEWPEGFRVFEIDQPKVLEFKDGTLAAEGVRASCERHAVAVDLRDDWASALVKAGFDPALPTAWLAEGLLPYLPPEAEANLLATVHDLSARGSRIAIESIALARSALLGADLDDTAREWGIDLKGLFSLEDRPDPGDVLAQRGWRVHRDPVGDLAAGFRRPLSDRAQQLGAAGEMVTAQRD</sequence>
<name>Y1742_SACEN</name>
<protein>
    <recommendedName>
        <fullName>Putative S-adenosyl-L-methionine-dependent methyltransferase SACE_1742</fullName>
        <ecNumber>2.1.1.-</ecNumber>
    </recommendedName>
</protein>
<keyword id="KW-0489">Methyltransferase</keyword>
<keyword id="KW-1185">Reference proteome</keyword>
<keyword id="KW-0949">S-adenosyl-L-methionine</keyword>
<keyword id="KW-0808">Transferase</keyword>